<keyword id="KW-0001">2Fe-2S</keyword>
<keyword id="KW-0256">Endoplasmic reticulum</keyword>
<keyword id="KW-0408">Iron</keyword>
<keyword id="KW-0411">Iron-sulfur</keyword>
<keyword id="KW-0472">Membrane</keyword>
<keyword id="KW-0479">Metal-binding</keyword>
<keyword id="KW-1185">Reference proteome</keyword>
<keyword id="KW-0812">Transmembrane</keyword>
<keyword id="KW-1133">Transmembrane helix</keyword>
<accession>Q9VAM6</accession>
<proteinExistence type="evidence at transcript level"/>
<evidence type="ECO:0000250" key="1"/>
<evidence type="ECO:0000255" key="2"/>
<evidence type="ECO:0000305" key="3"/>
<evidence type="ECO:0000312" key="4">
    <source>
        <dbReference type="FlyBase" id="FBgn0062442"/>
    </source>
</evidence>
<dbReference type="EMBL" id="AE014297">
    <property type="protein sequence ID" value="AAF56878.1"/>
    <property type="molecule type" value="Genomic_DNA"/>
</dbReference>
<dbReference type="EMBL" id="AY071722">
    <property type="protein sequence ID" value="AAL49344.1"/>
    <property type="molecule type" value="mRNA"/>
</dbReference>
<dbReference type="EMBL" id="AY095084">
    <property type="protein sequence ID" value="AAM11412.1"/>
    <property type="molecule type" value="mRNA"/>
</dbReference>
<dbReference type="RefSeq" id="NP_651684.1">
    <property type="nucleotide sequence ID" value="NM_143427.4"/>
</dbReference>
<dbReference type="SMR" id="Q9VAM6"/>
<dbReference type="BioGRID" id="68327">
    <property type="interactions" value="19"/>
</dbReference>
<dbReference type="FunCoup" id="Q9VAM6">
    <property type="interactions" value="1417"/>
</dbReference>
<dbReference type="IntAct" id="Q9VAM6">
    <property type="interactions" value="59"/>
</dbReference>
<dbReference type="STRING" id="7227.FBpp0084774"/>
<dbReference type="PaxDb" id="7227-FBpp0084774"/>
<dbReference type="DNASU" id="43459"/>
<dbReference type="EnsemblMetazoa" id="FBtr0085405">
    <property type="protein sequence ID" value="FBpp0084774"/>
    <property type="gene ID" value="FBgn0062442"/>
</dbReference>
<dbReference type="GeneID" id="43459"/>
<dbReference type="KEGG" id="dme:Dmel_CG1458"/>
<dbReference type="UCSC" id="CG1458-RA">
    <property type="organism name" value="d. melanogaster"/>
</dbReference>
<dbReference type="AGR" id="FB:FBgn0062442"/>
<dbReference type="CTD" id="493856"/>
<dbReference type="FlyBase" id="FBgn0062442">
    <property type="gene designation" value="Cisd"/>
</dbReference>
<dbReference type="VEuPathDB" id="VectorBase:FBgn0062442"/>
<dbReference type="eggNOG" id="KOG3461">
    <property type="taxonomic scope" value="Eukaryota"/>
</dbReference>
<dbReference type="GeneTree" id="ENSGT00940000169048"/>
<dbReference type="HOGENOM" id="CLU_132293_1_0_1"/>
<dbReference type="InParanoid" id="Q9VAM6"/>
<dbReference type="OMA" id="QIRKHEP"/>
<dbReference type="OrthoDB" id="449252at2759"/>
<dbReference type="PhylomeDB" id="Q9VAM6"/>
<dbReference type="BioGRID-ORCS" id="43459">
    <property type="hits" value="0 hits in 3 CRISPR screens"/>
</dbReference>
<dbReference type="GenomeRNAi" id="43459"/>
<dbReference type="PRO" id="PR:Q9VAM6"/>
<dbReference type="Proteomes" id="UP000000803">
    <property type="component" value="Chromosome 3R"/>
</dbReference>
<dbReference type="Bgee" id="FBgn0062442">
    <property type="expression patterns" value="Expressed in lamina wide-field cell Lawf2 (Drosophila) in brain and 229 other cell types or tissues"/>
</dbReference>
<dbReference type="GO" id="GO:0005789">
    <property type="term" value="C:endoplasmic reticulum membrane"/>
    <property type="evidence" value="ECO:0007669"/>
    <property type="project" value="UniProtKB-SubCell"/>
</dbReference>
<dbReference type="GO" id="GO:0005741">
    <property type="term" value="C:mitochondrial outer membrane"/>
    <property type="evidence" value="ECO:0000314"/>
    <property type="project" value="FlyBase"/>
</dbReference>
<dbReference type="GO" id="GO:0051537">
    <property type="term" value="F:2 iron, 2 sulfur cluster binding"/>
    <property type="evidence" value="ECO:0000250"/>
    <property type="project" value="FlyBase"/>
</dbReference>
<dbReference type="GO" id="GO:0047801">
    <property type="term" value="F:L-cysteine transaminase activity"/>
    <property type="evidence" value="ECO:0000318"/>
    <property type="project" value="GO_Central"/>
</dbReference>
<dbReference type="GO" id="GO:0046872">
    <property type="term" value="F:metal ion binding"/>
    <property type="evidence" value="ECO:0007669"/>
    <property type="project" value="UniProtKB-KW"/>
</dbReference>
<dbReference type="GO" id="GO:0006879">
    <property type="term" value="P:intracellular iron ion homeostasis"/>
    <property type="evidence" value="ECO:0000315"/>
    <property type="project" value="FlyBase"/>
</dbReference>
<dbReference type="GO" id="GO:0006839">
    <property type="term" value="P:mitochondrial transport"/>
    <property type="evidence" value="ECO:0000315"/>
    <property type="project" value="FlyBase"/>
</dbReference>
<dbReference type="GO" id="GO:0010506">
    <property type="term" value="P:regulation of autophagy"/>
    <property type="evidence" value="ECO:0007669"/>
    <property type="project" value="InterPro"/>
</dbReference>
<dbReference type="Gene3D" id="3.40.5.90">
    <property type="entry name" value="CDGSH iron-sulfur domain, mitoNEET-type"/>
    <property type="match status" value="1"/>
</dbReference>
<dbReference type="InterPro" id="IPR045131">
    <property type="entry name" value="CISD1/2"/>
</dbReference>
<dbReference type="InterPro" id="IPR018967">
    <property type="entry name" value="FeS-contain_CDGSH-typ"/>
</dbReference>
<dbReference type="InterPro" id="IPR019610">
    <property type="entry name" value="FeS-contain_mitoNEET_N"/>
</dbReference>
<dbReference type="InterPro" id="IPR042216">
    <property type="entry name" value="MitoNEET_CISD"/>
</dbReference>
<dbReference type="PANTHER" id="PTHR13680">
    <property type="entry name" value="CDGSH IRON-SULFUR DOMAIN-CONTAINING PROTEIN 1"/>
    <property type="match status" value="1"/>
</dbReference>
<dbReference type="PANTHER" id="PTHR13680:SF5">
    <property type="entry name" value="CDGSH IRON-SULFUR DOMAIN-CONTAINING PROTEIN 1"/>
    <property type="match status" value="1"/>
</dbReference>
<dbReference type="Pfam" id="PF10660">
    <property type="entry name" value="MitoNEET_N"/>
    <property type="match status" value="1"/>
</dbReference>
<dbReference type="Pfam" id="PF09360">
    <property type="entry name" value="zf-CDGSH"/>
    <property type="match status" value="1"/>
</dbReference>
<dbReference type="SMART" id="SM00704">
    <property type="entry name" value="ZnF_CDGSH"/>
    <property type="match status" value="1"/>
</dbReference>
<feature type="chain" id="PRO_0000316010" description="CDGSH iron-sulfur domain protein">
    <location>
        <begin position="1"/>
        <end position="133"/>
    </location>
</feature>
<feature type="topological domain" description="Lumenal" evidence="2">
    <location>
        <begin position="1"/>
        <end position="35"/>
    </location>
</feature>
<feature type="transmembrane region" description="Helical" evidence="2">
    <location>
        <begin position="36"/>
        <end position="58"/>
    </location>
</feature>
<feature type="topological domain" description="Cytoplasmic" evidence="2">
    <location>
        <begin position="59"/>
        <end position="133"/>
    </location>
</feature>
<feature type="binding site" evidence="1">
    <location>
        <position position="100"/>
    </location>
    <ligand>
        <name>[2Fe-2S] cluster</name>
        <dbReference type="ChEBI" id="CHEBI:190135"/>
    </ligand>
</feature>
<feature type="binding site" evidence="1">
    <location>
        <position position="102"/>
    </location>
    <ligand>
        <name>[2Fe-2S] cluster</name>
        <dbReference type="ChEBI" id="CHEBI:190135"/>
    </ligand>
</feature>
<feature type="binding site" evidence="1">
    <location>
        <position position="111"/>
    </location>
    <ligand>
        <name>[2Fe-2S] cluster</name>
        <dbReference type="ChEBI" id="CHEBI:190135"/>
    </ligand>
</feature>
<feature type="binding site" evidence="1">
    <location>
        <position position="115"/>
    </location>
    <ligand>
        <name>[2Fe-2S] cluster</name>
        <dbReference type="ChEBI" id="CHEBI:190135"/>
    </ligand>
</feature>
<sequence length="133" mass="14633">MEPISHLVKSSLPNYLSSLPVPDSIGGWFKLSFKDWLALIPPTVVVAGLGYTAYLAYCPAARASCAAKNSGRCNNHIRKNEPKVVDMIDVEDIAEKAAFCRCWKTKNWPYCDGSHGEHNKQTGDNVGPIVIKK</sequence>
<gene>
    <name evidence="4" type="primary">Cisd</name>
    <name evidence="4" type="synonym">Cisd2</name>
    <name evidence="4" type="ORF">CG1458</name>
</gene>
<name>CISD2_DROME</name>
<organism>
    <name type="scientific">Drosophila melanogaster</name>
    <name type="common">Fruit fly</name>
    <dbReference type="NCBI Taxonomy" id="7227"/>
    <lineage>
        <taxon>Eukaryota</taxon>
        <taxon>Metazoa</taxon>
        <taxon>Ecdysozoa</taxon>
        <taxon>Arthropoda</taxon>
        <taxon>Hexapoda</taxon>
        <taxon>Insecta</taxon>
        <taxon>Pterygota</taxon>
        <taxon>Neoptera</taxon>
        <taxon>Endopterygota</taxon>
        <taxon>Diptera</taxon>
        <taxon>Brachycera</taxon>
        <taxon>Muscomorpha</taxon>
        <taxon>Ephydroidea</taxon>
        <taxon>Drosophilidae</taxon>
        <taxon>Drosophila</taxon>
        <taxon>Sophophora</taxon>
    </lineage>
</organism>
<comment type="cofactor">
    <cofactor evidence="1">
        <name>[2Fe-2S] cluster</name>
        <dbReference type="ChEBI" id="CHEBI:190135"/>
    </cofactor>
    <text evidence="1">Binds 1 [2Fe-2S] cluster.</text>
</comment>
<comment type="subcellular location">
    <subcellularLocation>
        <location evidence="3">Endoplasmic reticulum membrane</location>
        <topology evidence="3">Single-pass membrane protein</topology>
    </subcellularLocation>
</comment>
<comment type="similarity">
    <text evidence="3">Belongs to the CISD protein family. CISD2 subfamily.</text>
</comment>
<reference key="1">
    <citation type="journal article" date="2000" name="Science">
        <title>The genome sequence of Drosophila melanogaster.</title>
        <authorList>
            <person name="Adams M.D."/>
            <person name="Celniker S.E."/>
            <person name="Holt R.A."/>
            <person name="Evans C.A."/>
            <person name="Gocayne J.D."/>
            <person name="Amanatides P.G."/>
            <person name="Scherer S.E."/>
            <person name="Li P.W."/>
            <person name="Hoskins R.A."/>
            <person name="Galle R.F."/>
            <person name="George R.A."/>
            <person name="Lewis S.E."/>
            <person name="Richards S."/>
            <person name="Ashburner M."/>
            <person name="Henderson S.N."/>
            <person name="Sutton G.G."/>
            <person name="Wortman J.R."/>
            <person name="Yandell M.D."/>
            <person name="Zhang Q."/>
            <person name="Chen L.X."/>
            <person name="Brandon R.C."/>
            <person name="Rogers Y.-H.C."/>
            <person name="Blazej R.G."/>
            <person name="Champe M."/>
            <person name="Pfeiffer B.D."/>
            <person name="Wan K.H."/>
            <person name="Doyle C."/>
            <person name="Baxter E.G."/>
            <person name="Helt G."/>
            <person name="Nelson C.R."/>
            <person name="Miklos G.L.G."/>
            <person name="Abril J.F."/>
            <person name="Agbayani A."/>
            <person name="An H.-J."/>
            <person name="Andrews-Pfannkoch C."/>
            <person name="Baldwin D."/>
            <person name="Ballew R.M."/>
            <person name="Basu A."/>
            <person name="Baxendale J."/>
            <person name="Bayraktaroglu L."/>
            <person name="Beasley E.M."/>
            <person name="Beeson K.Y."/>
            <person name="Benos P.V."/>
            <person name="Berman B.P."/>
            <person name="Bhandari D."/>
            <person name="Bolshakov S."/>
            <person name="Borkova D."/>
            <person name="Botchan M.R."/>
            <person name="Bouck J."/>
            <person name="Brokstein P."/>
            <person name="Brottier P."/>
            <person name="Burtis K.C."/>
            <person name="Busam D.A."/>
            <person name="Butler H."/>
            <person name="Cadieu E."/>
            <person name="Center A."/>
            <person name="Chandra I."/>
            <person name="Cherry J.M."/>
            <person name="Cawley S."/>
            <person name="Dahlke C."/>
            <person name="Davenport L.B."/>
            <person name="Davies P."/>
            <person name="de Pablos B."/>
            <person name="Delcher A."/>
            <person name="Deng Z."/>
            <person name="Mays A.D."/>
            <person name="Dew I."/>
            <person name="Dietz S.M."/>
            <person name="Dodson K."/>
            <person name="Doup L.E."/>
            <person name="Downes M."/>
            <person name="Dugan-Rocha S."/>
            <person name="Dunkov B.C."/>
            <person name="Dunn P."/>
            <person name="Durbin K.J."/>
            <person name="Evangelista C.C."/>
            <person name="Ferraz C."/>
            <person name="Ferriera S."/>
            <person name="Fleischmann W."/>
            <person name="Fosler C."/>
            <person name="Gabrielian A.E."/>
            <person name="Garg N.S."/>
            <person name="Gelbart W.M."/>
            <person name="Glasser K."/>
            <person name="Glodek A."/>
            <person name="Gong F."/>
            <person name="Gorrell J.H."/>
            <person name="Gu Z."/>
            <person name="Guan P."/>
            <person name="Harris M."/>
            <person name="Harris N.L."/>
            <person name="Harvey D.A."/>
            <person name="Heiman T.J."/>
            <person name="Hernandez J.R."/>
            <person name="Houck J."/>
            <person name="Hostin D."/>
            <person name="Houston K.A."/>
            <person name="Howland T.J."/>
            <person name="Wei M.-H."/>
            <person name="Ibegwam C."/>
            <person name="Jalali M."/>
            <person name="Kalush F."/>
            <person name="Karpen G.H."/>
            <person name="Ke Z."/>
            <person name="Kennison J.A."/>
            <person name="Ketchum K.A."/>
            <person name="Kimmel B.E."/>
            <person name="Kodira C.D."/>
            <person name="Kraft C.L."/>
            <person name="Kravitz S."/>
            <person name="Kulp D."/>
            <person name="Lai Z."/>
            <person name="Lasko P."/>
            <person name="Lei Y."/>
            <person name="Levitsky A.A."/>
            <person name="Li J.H."/>
            <person name="Li Z."/>
            <person name="Liang Y."/>
            <person name="Lin X."/>
            <person name="Liu X."/>
            <person name="Mattei B."/>
            <person name="McIntosh T.C."/>
            <person name="McLeod M.P."/>
            <person name="McPherson D."/>
            <person name="Merkulov G."/>
            <person name="Milshina N.V."/>
            <person name="Mobarry C."/>
            <person name="Morris J."/>
            <person name="Moshrefi A."/>
            <person name="Mount S.M."/>
            <person name="Moy M."/>
            <person name="Murphy B."/>
            <person name="Murphy L."/>
            <person name="Muzny D.M."/>
            <person name="Nelson D.L."/>
            <person name="Nelson D.R."/>
            <person name="Nelson K.A."/>
            <person name="Nixon K."/>
            <person name="Nusskern D.R."/>
            <person name="Pacleb J.M."/>
            <person name="Palazzolo M."/>
            <person name="Pittman G.S."/>
            <person name="Pan S."/>
            <person name="Pollard J."/>
            <person name="Puri V."/>
            <person name="Reese M.G."/>
            <person name="Reinert K."/>
            <person name="Remington K."/>
            <person name="Saunders R.D.C."/>
            <person name="Scheeler F."/>
            <person name="Shen H."/>
            <person name="Shue B.C."/>
            <person name="Siden-Kiamos I."/>
            <person name="Simpson M."/>
            <person name="Skupski M.P."/>
            <person name="Smith T.J."/>
            <person name="Spier E."/>
            <person name="Spradling A.C."/>
            <person name="Stapleton M."/>
            <person name="Strong R."/>
            <person name="Sun E."/>
            <person name="Svirskas R."/>
            <person name="Tector C."/>
            <person name="Turner R."/>
            <person name="Venter E."/>
            <person name="Wang A.H."/>
            <person name="Wang X."/>
            <person name="Wang Z.-Y."/>
            <person name="Wassarman D.A."/>
            <person name="Weinstock G.M."/>
            <person name="Weissenbach J."/>
            <person name="Williams S.M."/>
            <person name="Woodage T."/>
            <person name="Worley K.C."/>
            <person name="Wu D."/>
            <person name="Yang S."/>
            <person name="Yao Q.A."/>
            <person name="Ye J."/>
            <person name="Yeh R.-F."/>
            <person name="Zaveri J.S."/>
            <person name="Zhan M."/>
            <person name="Zhang G."/>
            <person name="Zhao Q."/>
            <person name="Zheng L."/>
            <person name="Zheng X.H."/>
            <person name="Zhong F.N."/>
            <person name="Zhong W."/>
            <person name="Zhou X."/>
            <person name="Zhu S.C."/>
            <person name="Zhu X."/>
            <person name="Smith H.O."/>
            <person name="Gibbs R.A."/>
            <person name="Myers E.W."/>
            <person name="Rubin G.M."/>
            <person name="Venter J.C."/>
        </authorList>
    </citation>
    <scope>NUCLEOTIDE SEQUENCE [LARGE SCALE GENOMIC DNA]</scope>
    <source>
        <strain>Berkeley</strain>
    </source>
</reference>
<reference key="2">
    <citation type="journal article" date="2002" name="Genome Biol.">
        <title>Annotation of the Drosophila melanogaster euchromatic genome: a systematic review.</title>
        <authorList>
            <person name="Misra S."/>
            <person name="Crosby M.A."/>
            <person name="Mungall C.J."/>
            <person name="Matthews B.B."/>
            <person name="Campbell K.S."/>
            <person name="Hradecky P."/>
            <person name="Huang Y."/>
            <person name="Kaminker J.S."/>
            <person name="Millburn G.H."/>
            <person name="Prochnik S.E."/>
            <person name="Smith C.D."/>
            <person name="Tupy J.L."/>
            <person name="Whitfield E.J."/>
            <person name="Bayraktaroglu L."/>
            <person name="Berman B.P."/>
            <person name="Bettencourt B.R."/>
            <person name="Celniker S.E."/>
            <person name="de Grey A.D.N.J."/>
            <person name="Drysdale R.A."/>
            <person name="Harris N.L."/>
            <person name="Richter J."/>
            <person name="Russo S."/>
            <person name="Schroeder A.J."/>
            <person name="Shu S.Q."/>
            <person name="Stapleton M."/>
            <person name="Yamada C."/>
            <person name="Ashburner M."/>
            <person name="Gelbart W.M."/>
            <person name="Rubin G.M."/>
            <person name="Lewis S.E."/>
        </authorList>
    </citation>
    <scope>GENOME REANNOTATION</scope>
    <source>
        <strain>Berkeley</strain>
    </source>
</reference>
<reference key="3">
    <citation type="journal article" date="2002" name="Genome Biol.">
        <title>A Drosophila full-length cDNA resource.</title>
        <authorList>
            <person name="Stapleton M."/>
            <person name="Carlson J.W."/>
            <person name="Brokstein P."/>
            <person name="Yu C."/>
            <person name="Champe M."/>
            <person name="George R.A."/>
            <person name="Guarin H."/>
            <person name="Kronmiller B."/>
            <person name="Pacleb J.M."/>
            <person name="Park S."/>
            <person name="Wan K.H."/>
            <person name="Rubin G.M."/>
            <person name="Celniker S.E."/>
        </authorList>
    </citation>
    <scope>NUCLEOTIDE SEQUENCE [LARGE SCALE MRNA]</scope>
    <source>
        <strain>Berkeley</strain>
        <tissue>Embryo</tissue>
        <tissue>Head</tissue>
    </source>
</reference>
<protein>
    <recommendedName>
        <fullName evidence="4">CDGSH iron-sulfur domain protein</fullName>
    </recommendedName>
    <alternativeName>
        <fullName evidence="3">CDGSH iron-sulfur domain-containing protein-2 homolog</fullName>
    </alternativeName>
</protein>